<keyword id="KW-0028">Amino-acid biosynthesis</keyword>
<keyword id="KW-0057">Aromatic amino acid biosynthesis</keyword>
<keyword id="KW-0456">Lyase</keyword>
<keyword id="KW-0704">Schiff base</keyword>
<proteinExistence type="inferred from homology"/>
<name>AROD_SALA4</name>
<evidence type="ECO:0000255" key="1">
    <source>
        <dbReference type="HAMAP-Rule" id="MF_00214"/>
    </source>
</evidence>
<reference key="1">
    <citation type="journal article" date="2011" name="J. Bacteriol.">
        <title>Comparative genomics of 28 Salmonella enterica isolates: evidence for CRISPR-mediated adaptive sublineage evolution.</title>
        <authorList>
            <person name="Fricke W.F."/>
            <person name="Mammel M.K."/>
            <person name="McDermott P.F."/>
            <person name="Tartera C."/>
            <person name="White D.G."/>
            <person name="Leclerc J.E."/>
            <person name="Ravel J."/>
            <person name="Cebula T.A."/>
        </authorList>
    </citation>
    <scope>NUCLEOTIDE SEQUENCE [LARGE SCALE GENOMIC DNA]</scope>
    <source>
        <strain>SL483</strain>
    </source>
</reference>
<protein>
    <recommendedName>
        <fullName evidence="1">3-dehydroquinate dehydratase</fullName>
        <shortName evidence="1">3-dehydroquinase</shortName>
        <ecNumber evidence="1">4.2.1.10</ecNumber>
    </recommendedName>
    <alternativeName>
        <fullName evidence="1">Type I DHQase</fullName>
    </alternativeName>
    <alternativeName>
        <fullName evidence="1">Type I dehydroquinase</fullName>
        <shortName evidence="1">DHQ1</shortName>
    </alternativeName>
</protein>
<organism>
    <name type="scientific">Salmonella agona (strain SL483)</name>
    <dbReference type="NCBI Taxonomy" id="454166"/>
    <lineage>
        <taxon>Bacteria</taxon>
        <taxon>Pseudomonadati</taxon>
        <taxon>Pseudomonadota</taxon>
        <taxon>Gammaproteobacteria</taxon>
        <taxon>Enterobacterales</taxon>
        <taxon>Enterobacteriaceae</taxon>
        <taxon>Salmonella</taxon>
    </lineage>
</organism>
<accession>B5F7D7</accession>
<dbReference type="EC" id="4.2.1.10" evidence="1"/>
<dbReference type="EMBL" id="CP001138">
    <property type="protein sequence ID" value="ACH52948.1"/>
    <property type="molecule type" value="Genomic_DNA"/>
</dbReference>
<dbReference type="RefSeq" id="WP_000860221.1">
    <property type="nucleotide sequence ID" value="NC_011149.1"/>
</dbReference>
<dbReference type="SMR" id="B5F7D7"/>
<dbReference type="KEGG" id="sea:SeAg_B1814"/>
<dbReference type="HOGENOM" id="CLU_064444_0_0_6"/>
<dbReference type="UniPathway" id="UPA00053">
    <property type="reaction ID" value="UER00086"/>
</dbReference>
<dbReference type="Proteomes" id="UP000008819">
    <property type="component" value="Chromosome"/>
</dbReference>
<dbReference type="GO" id="GO:0003855">
    <property type="term" value="F:3-dehydroquinate dehydratase activity"/>
    <property type="evidence" value="ECO:0007669"/>
    <property type="project" value="UniProtKB-UniRule"/>
</dbReference>
<dbReference type="GO" id="GO:0046279">
    <property type="term" value="P:3,4-dihydroxybenzoate biosynthetic process"/>
    <property type="evidence" value="ECO:0007669"/>
    <property type="project" value="TreeGrafter"/>
</dbReference>
<dbReference type="GO" id="GO:0008652">
    <property type="term" value="P:amino acid biosynthetic process"/>
    <property type="evidence" value="ECO:0007669"/>
    <property type="project" value="UniProtKB-KW"/>
</dbReference>
<dbReference type="GO" id="GO:0009073">
    <property type="term" value="P:aromatic amino acid family biosynthetic process"/>
    <property type="evidence" value="ECO:0007669"/>
    <property type="project" value="UniProtKB-KW"/>
</dbReference>
<dbReference type="GO" id="GO:0009423">
    <property type="term" value="P:chorismate biosynthetic process"/>
    <property type="evidence" value="ECO:0007669"/>
    <property type="project" value="UniProtKB-UniRule"/>
</dbReference>
<dbReference type="CDD" id="cd00502">
    <property type="entry name" value="DHQase_I"/>
    <property type="match status" value="1"/>
</dbReference>
<dbReference type="FunFam" id="3.20.20.70:FF:000047">
    <property type="entry name" value="3-dehydroquinate dehydratase"/>
    <property type="match status" value="1"/>
</dbReference>
<dbReference type="Gene3D" id="3.20.20.70">
    <property type="entry name" value="Aldolase class I"/>
    <property type="match status" value="1"/>
</dbReference>
<dbReference type="HAMAP" id="MF_00214">
    <property type="entry name" value="AroD"/>
    <property type="match status" value="1"/>
</dbReference>
<dbReference type="InterPro" id="IPR018508">
    <property type="entry name" value="3-dehydroquinate_DH_AS"/>
</dbReference>
<dbReference type="InterPro" id="IPR013785">
    <property type="entry name" value="Aldolase_TIM"/>
</dbReference>
<dbReference type="InterPro" id="IPR001381">
    <property type="entry name" value="DHquinase_I"/>
</dbReference>
<dbReference type="InterPro" id="IPR050146">
    <property type="entry name" value="Type-I_3-dehydroquinase"/>
</dbReference>
<dbReference type="NCBIfam" id="TIGR01093">
    <property type="entry name" value="aroD"/>
    <property type="match status" value="1"/>
</dbReference>
<dbReference type="PANTHER" id="PTHR43699">
    <property type="entry name" value="3-DEHYDROQUINATE DEHYDRATASE"/>
    <property type="match status" value="1"/>
</dbReference>
<dbReference type="PANTHER" id="PTHR43699:SF1">
    <property type="entry name" value="3-DEHYDROQUINATE DEHYDRATASE"/>
    <property type="match status" value="1"/>
</dbReference>
<dbReference type="Pfam" id="PF01487">
    <property type="entry name" value="DHquinase_I"/>
    <property type="match status" value="1"/>
</dbReference>
<dbReference type="SUPFAM" id="SSF51569">
    <property type="entry name" value="Aldolase"/>
    <property type="match status" value="1"/>
</dbReference>
<dbReference type="PROSITE" id="PS01028">
    <property type="entry name" value="DEHYDROQUINASE_I"/>
    <property type="match status" value="1"/>
</dbReference>
<sequence>MKTVTVRDLVVGEGAPKIIVSLMGKTITDVKSEALAYREADFDILEWRVDHFANVTTAESVLEAAGAIREIITDKPLLFTFRSAKEGGEQALTTEQYIALNRAAVDSGLVDMIDLELFTGDDEVKATVGYAHQHNVAVIMSNHDFHKTPAAEEIVQRLRKMQELGADIPKIAVMPQTKADVLTLLTATVEMQERYADRPIITMSMSKTGVISRLAGEVFGSAATFGAVKKASAPGQISVADLRTVLTILHQA</sequence>
<gene>
    <name evidence="1" type="primary">aroD</name>
    <name type="ordered locus">SeAg_B1814</name>
</gene>
<comment type="function">
    <text evidence="1">Involved in the third step of the chorismate pathway, which leads to the biosynthesis of aromatic amino acids. Catalyzes the cis-dehydration of 3-dehydroquinate (DHQ) and introduces the first double bond of the aromatic ring to yield 3-dehydroshikimate.</text>
</comment>
<comment type="catalytic activity">
    <reaction evidence="1">
        <text>3-dehydroquinate = 3-dehydroshikimate + H2O</text>
        <dbReference type="Rhea" id="RHEA:21096"/>
        <dbReference type="ChEBI" id="CHEBI:15377"/>
        <dbReference type="ChEBI" id="CHEBI:16630"/>
        <dbReference type="ChEBI" id="CHEBI:32364"/>
        <dbReference type="EC" id="4.2.1.10"/>
    </reaction>
</comment>
<comment type="pathway">
    <text evidence="1">Metabolic intermediate biosynthesis; chorismate biosynthesis; chorismate from D-erythrose 4-phosphate and phosphoenolpyruvate: step 3/7.</text>
</comment>
<comment type="subunit">
    <text evidence="1">Homodimer.</text>
</comment>
<comment type="similarity">
    <text evidence="1">Belongs to the type-I 3-dehydroquinase family.</text>
</comment>
<feature type="chain" id="PRO_1000099912" description="3-dehydroquinate dehydratase">
    <location>
        <begin position="1"/>
        <end position="252"/>
    </location>
</feature>
<feature type="active site" description="Proton donor/acceptor" evidence="1">
    <location>
        <position position="143"/>
    </location>
</feature>
<feature type="active site" description="Schiff-base intermediate with substrate" evidence="1">
    <location>
        <position position="170"/>
    </location>
</feature>
<feature type="binding site" evidence="1">
    <location>
        <position position="21"/>
    </location>
    <ligand>
        <name>3-dehydroquinate</name>
        <dbReference type="ChEBI" id="CHEBI:32364"/>
    </ligand>
</feature>
<feature type="binding site" evidence="1">
    <location>
        <begin position="46"/>
        <end position="48"/>
    </location>
    <ligand>
        <name>3-dehydroquinate</name>
        <dbReference type="ChEBI" id="CHEBI:32364"/>
    </ligand>
</feature>
<feature type="binding site" evidence="1">
    <location>
        <position position="82"/>
    </location>
    <ligand>
        <name>3-dehydroquinate</name>
        <dbReference type="ChEBI" id="CHEBI:32364"/>
    </ligand>
</feature>
<feature type="binding site" evidence="1">
    <location>
        <position position="213"/>
    </location>
    <ligand>
        <name>3-dehydroquinate</name>
        <dbReference type="ChEBI" id="CHEBI:32364"/>
    </ligand>
</feature>
<feature type="binding site" evidence="1">
    <location>
        <position position="232"/>
    </location>
    <ligand>
        <name>3-dehydroquinate</name>
        <dbReference type="ChEBI" id="CHEBI:32364"/>
    </ligand>
</feature>
<feature type="binding site" evidence="1">
    <location>
        <position position="236"/>
    </location>
    <ligand>
        <name>3-dehydroquinate</name>
        <dbReference type="ChEBI" id="CHEBI:32364"/>
    </ligand>
</feature>